<proteinExistence type="inferred from homology"/>
<keyword id="KW-0004">4Fe-4S</keyword>
<keyword id="KW-0342">GTP-binding</keyword>
<keyword id="KW-0408">Iron</keyword>
<keyword id="KW-0411">Iron-sulfur</keyword>
<keyword id="KW-0456">Lyase</keyword>
<keyword id="KW-0479">Metal-binding</keyword>
<keyword id="KW-0501">Molybdenum cofactor biosynthesis</keyword>
<keyword id="KW-0547">Nucleotide-binding</keyword>
<keyword id="KW-0949">S-adenosyl-L-methionine</keyword>
<organism>
    <name type="scientific">Methanosarcina mazei (strain ATCC BAA-159 / DSM 3647 / Goe1 / Go1 / JCM 11833 / OCM 88)</name>
    <name type="common">Methanosarcina frisia</name>
    <dbReference type="NCBI Taxonomy" id="192952"/>
    <lineage>
        <taxon>Archaea</taxon>
        <taxon>Methanobacteriati</taxon>
        <taxon>Methanobacteriota</taxon>
        <taxon>Stenosarchaea group</taxon>
        <taxon>Methanomicrobia</taxon>
        <taxon>Methanosarcinales</taxon>
        <taxon>Methanosarcinaceae</taxon>
        <taxon>Methanosarcina</taxon>
    </lineage>
</organism>
<feature type="chain" id="PRO_0000153019" description="Probable GTP 3',8-cyclase">
    <location>
        <begin position="1"/>
        <end position="334"/>
    </location>
</feature>
<feature type="domain" description="Radical SAM core" evidence="2">
    <location>
        <begin position="24"/>
        <end position="256"/>
    </location>
</feature>
<feature type="binding site" evidence="1">
    <location>
        <position position="33"/>
    </location>
    <ligand>
        <name>GTP</name>
        <dbReference type="ChEBI" id="CHEBI:37565"/>
    </ligand>
</feature>
<feature type="binding site" evidence="1">
    <location>
        <position position="40"/>
    </location>
    <ligand>
        <name>[4Fe-4S] cluster</name>
        <dbReference type="ChEBI" id="CHEBI:49883"/>
        <label>1</label>
        <note>4Fe-4S-S-AdoMet</note>
    </ligand>
</feature>
<feature type="binding site" evidence="1">
    <location>
        <position position="44"/>
    </location>
    <ligand>
        <name>[4Fe-4S] cluster</name>
        <dbReference type="ChEBI" id="CHEBI:49883"/>
        <label>1</label>
        <note>4Fe-4S-S-AdoMet</note>
    </ligand>
</feature>
<feature type="binding site" evidence="1">
    <location>
        <position position="46"/>
    </location>
    <ligand>
        <name>S-adenosyl-L-methionine</name>
        <dbReference type="ChEBI" id="CHEBI:59789"/>
    </ligand>
</feature>
<feature type="binding site" evidence="1">
    <location>
        <position position="47"/>
    </location>
    <ligand>
        <name>[4Fe-4S] cluster</name>
        <dbReference type="ChEBI" id="CHEBI:49883"/>
        <label>1</label>
        <note>4Fe-4S-S-AdoMet</note>
    </ligand>
</feature>
<feature type="binding site" evidence="1">
    <location>
        <position position="85"/>
    </location>
    <ligand>
        <name>GTP</name>
        <dbReference type="ChEBI" id="CHEBI:37565"/>
    </ligand>
</feature>
<feature type="binding site" evidence="1">
    <location>
        <position position="89"/>
    </location>
    <ligand>
        <name>S-adenosyl-L-methionine</name>
        <dbReference type="ChEBI" id="CHEBI:59789"/>
    </ligand>
</feature>
<feature type="binding site" evidence="1">
    <location>
        <position position="113"/>
    </location>
    <ligand>
        <name>GTP</name>
        <dbReference type="ChEBI" id="CHEBI:37565"/>
    </ligand>
</feature>
<feature type="binding site" evidence="1">
    <location>
        <position position="137"/>
    </location>
    <ligand>
        <name>S-adenosyl-L-methionine</name>
        <dbReference type="ChEBI" id="CHEBI:59789"/>
    </ligand>
</feature>
<feature type="binding site" evidence="1">
    <location>
        <position position="176"/>
    </location>
    <ligand>
        <name>GTP</name>
        <dbReference type="ChEBI" id="CHEBI:37565"/>
    </ligand>
</feature>
<feature type="binding site" evidence="1">
    <location>
        <position position="269"/>
    </location>
    <ligand>
        <name>[4Fe-4S] cluster</name>
        <dbReference type="ChEBI" id="CHEBI:49883"/>
        <label>2</label>
        <note>4Fe-4S-substrate</note>
    </ligand>
</feature>
<feature type="binding site" evidence="1">
    <location>
        <position position="272"/>
    </location>
    <ligand>
        <name>[4Fe-4S] cluster</name>
        <dbReference type="ChEBI" id="CHEBI:49883"/>
        <label>2</label>
        <note>4Fe-4S-substrate</note>
    </ligand>
</feature>
<feature type="binding site" evidence="1">
    <location>
        <begin position="274"/>
        <end position="276"/>
    </location>
    <ligand>
        <name>GTP</name>
        <dbReference type="ChEBI" id="CHEBI:37565"/>
    </ligand>
</feature>
<feature type="binding site" evidence="1">
    <location>
        <position position="286"/>
    </location>
    <ligand>
        <name>[4Fe-4S] cluster</name>
        <dbReference type="ChEBI" id="CHEBI:49883"/>
        <label>2</label>
        <note>4Fe-4S-substrate</note>
    </ligand>
</feature>
<gene>
    <name evidence="1" type="primary">moaA</name>
    <name type="ordered locus">MM_1393</name>
</gene>
<protein>
    <recommendedName>
        <fullName evidence="1">Probable GTP 3',8-cyclase</fullName>
        <ecNumber evidence="1">4.1.99.22</ecNumber>
    </recommendedName>
    <alternativeName>
        <fullName evidence="1">Molybdenum cofactor biosynthesis protein A</fullName>
    </alternativeName>
</protein>
<reference key="1">
    <citation type="journal article" date="2002" name="J. Mol. Microbiol. Biotechnol.">
        <title>The genome of Methanosarcina mazei: evidence for lateral gene transfer between Bacteria and Archaea.</title>
        <authorList>
            <person name="Deppenmeier U."/>
            <person name="Johann A."/>
            <person name="Hartsch T."/>
            <person name="Merkl R."/>
            <person name="Schmitz R.A."/>
            <person name="Martinez-Arias R."/>
            <person name="Henne A."/>
            <person name="Wiezer A."/>
            <person name="Baeumer S."/>
            <person name="Jacobi C."/>
            <person name="Brueggemann H."/>
            <person name="Lienard T."/>
            <person name="Christmann A."/>
            <person name="Boemecke M."/>
            <person name="Steckel S."/>
            <person name="Bhattacharyya A."/>
            <person name="Lykidis A."/>
            <person name="Overbeek R."/>
            <person name="Klenk H.-P."/>
            <person name="Gunsalus R.P."/>
            <person name="Fritz H.-J."/>
            <person name="Gottschalk G."/>
        </authorList>
    </citation>
    <scope>NUCLEOTIDE SEQUENCE [LARGE SCALE GENOMIC DNA]</scope>
    <source>
        <strain>ATCC BAA-159 / DSM 3647 / Goe1 / Go1 / JCM 11833 / OCM 88</strain>
    </source>
</reference>
<comment type="function">
    <text evidence="1">Catalyzes the cyclization of GTP to (8S)-3',8-cyclo-7,8-dihydroguanosine 5'-triphosphate.</text>
</comment>
<comment type="catalytic activity">
    <reaction evidence="1">
        <text>GTP + AH2 + S-adenosyl-L-methionine = (8S)-3',8-cyclo-7,8-dihydroguanosine 5'-triphosphate + 5'-deoxyadenosine + L-methionine + A + H(+)</text>
        <dbReference type="Rhea" id="RHEA:49576"/>
        <dbReference type="ChEBI" id="CHEBI:13193"/>
        <dbReference type="ChEBI" id="CHEBI:15378"/>
        <dbReference type="ChEBI" id="CHEBI:17319"/>
        <dbReference type="ChEBI" id="CHEBI:17499"/>
        <dbReference type="ChEBI" id="CHEBI:37565"/>
        <dbReference type="ChEBI" id="CHEBI:57844"/>
        <dbReference type="ChEBI" id="CHEBI:59789"/>
        <dbReference type="ChEBI" id="CHEBI:131766"/>
        <dbReference type="EC" id="4.1.99.22"/>
    </reaction>
</comment>
<comment type="cofactor">
    <cofactor evidence="1">
        <name>[4Fe-4S] cluster</name>
        <dbReference type="ChEBI" id="CHEBI:49883"/>
    </cofactor>
    <text evidence="1">Binds 2 [4Fe-4S] clusters. Binds 1 [4Fe-4S] cluster coordinated with 3 cysteines and an exchangeable S-adenosyl-L-methionine and 1 [4Fe-4S] cluster coordinated with 3 cysteines and the GTP-derived substrate.</text>
</comment>
<comment type="pathway">
    <text evidence="1">Cofactor biosynthesis; molybdopterin biosynthesis.</text>
</comment>
<comment type="similarity">
    <text evidence="1">Belongs to the radical SAM superfamily. MoaA family.</text>
</comment>
<dbReference type="EC" id="4.1.99.22" evidence="1"/>
<dbReference type="EMBL" id="AE008384">
    <property type="protein sequence ID" value="AAM31089.1"/>
    <property type="molecule type" value="Genomic_DNA"/>
</dbReference>
<dbReference type="RefSeq" id="WP_011033339.1">
    <property type="nucleotide sequence ID" value="NC_003901.1"/>
</dbReference>
<dbReference type="SMR" id="Q8PX29"/>
<dbReference type="GeneID" id="82160437"/>
<dbReference type="KEGG" id="mma:MM_1393"/>
<dbReference type="PATRIC" id="fig|192952.21.peg.1615"/>
<dbReference type="eggNOG" id="arCOG00930">
    <property type="taxonomic scope" value="Archaea"/>
</dbReference>
<dbReference type="HOGENOM" id="CLU_009273_0_1_2"/>
<dbReference type="UniPathway" id="UPA00344"/>
<dbReference type="Proteomes" id="UP000000595">
    <property type="component" value="Chromosome"/>
</dbReference>
<dbReference type="GO" id="GO:0051539">
    <property type="term" value="F:4 iron, 4 sulfur cluster binding"/>
    <property type="evidence" value="ECO:0007669"/>
    <property type="project" value="UniProtKB-UniRule"/>
</dbReference>
<dbReference type="GO" id="GO:0061799">
    <property type="term" value="F:cyclic pyranopterin monophosphate synthase activity"/>
    <property type="evidence" value="ECO:0007669"/>
    <property type="project" value="TreeGrafter"/>
</dbReference>
<dbReference type="GO" id="GO:0061798">
    <property type="term" value="F:GTP 3',8'-cyclase activity"/>
    <property type="evidence" value="ECO:0007669"/>
    <property type="project" value="UniProtKB-UniRule"/>
</dbReference>
<dbReference type="GO" id="GO:0005525">
    <property type="term" value="F:GTP binding"/>
    <property type="evidence" value="ECO:0007669"/>
    <property type="project" value="UniProtKB-UniRule"/>
</dbReference>
<dbReference type="GO" id="GO:0046872">
    <property type="term" value="F:metal ion binding"/>
    <property type="evidence" value="ECO:0007669"/>
    <property type="project" value="UniProtKB-KW"/>
</dbReference>
<dbReference type="GO" id="GO:1904047">
    <property type="term" value="F:S-adenosyl-L-methionine binding"/>
    <property type="evidence" value="ECO:0007669"/>
    <property type="project" value="UniProtKB-UniRule"/>
</dbReference>
<dbReference type="GO" id="GO:0006777">
    <property type="term" value="P:Mo-molybdopterin cofactor biosynthetic process"/>
    <property type="evidence" value="ECO:0007669"/>
    <property type="project" value="UniProtKB-UniRule"/>
</dbReference>
<dbReference type="CDD" id="cd01335">
    <property type="entry name" value="Radical_SAM"/>
    <property type="match status" value="1"/>
</dbReference>
<dbReference type="CDD" id="cd21117">
    <property type="entry name" value="Twitch_MoaA"/>
    <property type="match status" value="1"/>
</dbReference>
<dbReference type="Gene3D" id="3.20.20.70">
    <property type="entry name" value="Aldolase class I"/>
    <property type="match status" value="1"/>
</dbReference>
<dbReference type="HAMAP" id="MF_01225_A">
    <property type="entry name" value="MoaA_A"/>
    <property type="match status" value="1"/>
</dbReference>
<dbReference type="InterPro" id="IPR013785">
    <property type="entry name" value="Aldolase_TIM"/>
</dbReference>
<dbReference type="InterPro" id="IPR006638">
    <property type="entry name" value="Elp3/MiaA/NifB-like_rSAM"/>
</dbReference>
<dbReference type="InterPro" id="IPR013485">
    <property type="entry name" value="MoaA_arc"/>
</dbReference>
<dbReference type="InterPro" id="IPR000385">
    <property type="entry name" value="MoaA_NifB_PqqE_Fe-S-bd_CS"/>
</dbReference>
<dbReference type="InterPro" id="IPR010505">
    <property type="entry name" value="MoaA_twitch"/>
</dbReference>
<dbReference type="InterPro" id="IPR050105">
    <property type="entry name" value="MoCo_biosynth_MoaA/MoaC"/>
</dbReference>
<dbReference type="InterPro" id="IPR007197">
    <property type="entry name" value="rSAM"/>
</dbReference>
<dbReference type="NCBIfam" id="TIGR02668">
    <property type="entry name" value="moaA_archaeal"/>
    <property type="match status" value="1"/>
</dbReference>
<dbReference type="NCBIfam" id="NF001199">
    <property type="entry name" value="PRK00164.2-1"/>
    <property type="match status" value="1"/>
</dbReference>
<dbReference type="PANTHER" id="PTHR22960:SF0">
    <property type="entry name" value="MOLYBDENUM COFACTOR BIOSYNTHESIS PROTEIN 1"/>
    <property type="match status" value="1"/>
</dbReference>
<dbReference type="PANTHER" id="PTHR22960">
    <property type="entry name" value="MOLYBDOPTERIN COFACTOR SYNTHESIS PROTEIN A"/>
    <property type="match status" value="1"/>
</dbReference>
<dbReference type="Pfam" id="PF13353">
    <property type="entry name" value="Fer4_12"/>
    <property type="match status" value="1"/>
</dbReference>
<dbReference type="Pfam" id="PF06463">
    <property type="entry name" value="Mob_synth_C"/>
    <property type="match status" value="1"/>
</dbReference>
<dbReference type="Pfam" id="PF04055">
    <property type="entry name" value="Radical_SAM"/>
    <property type="match status" value="1"/>
</dbReference>
<dbReference type="SFLD" id="SFLDG01383">
    <property type="entry name" value="cyclic_pyranopterin_phosphate"/>
    <property type="match status" value="1"/>
</dbReference>
<dbReference type="SFLD" id="SFLDG01386">
    <property type="entry name" value="main_SPASM_domain-containing"/>
    <property type="match status" value="1"/>
</dbReference>
<dbReference type="SMART" id="SM00729">
    <property type="entry name" value="Elp3"/>
    <property type="match status" value="1"/>
</dbReference>
<dbReference type="SUPFAM" id="SSF102114">
    <property type="entry name" value="Radical SAM enzymes"/>
    <property type="match status" value="1"/>
</dbReference>
<dbReference type="PROSITE" id="PS01305">
    <property type="entry name" value="MOAA_NIFB_PQQE"/>
    <property type="match status" value="1"/>
</dbReference>
<dbReference type="PROSITE" id="PS51918">
    <property type="entry name" value="RADICAL_SAM"/>
    <property type="match status" value="1"/>
</dbReference>
<sequence length="334" mass="37691">MKDNNSGKNSLFREENEEEVLVDPYGRKVTGLRISITDRCNLSCMYCHNEGAECCTCGPVGNEMSPELICSIIREAAKFGVRKVKFSGGEPLFRKDFEDILACLPPLKEVSATTNGILLEKRAKTLKAAGLDRINVSLDSLDPEKYRKITGAPPGTLEKVIRGINSAVEAGLTPVKLNMVLLKGINENEIDEMMDFIRPYKGKVILQLIELMNIDPELSKYTIDSKTLEKSLEERASEVRVRHLHHRKKYMIDGVEVEFVRPMDNSEFCAHCSRLRVTADGKLRPCLLVHDNLVDIGGANSPEEIEKLLRLAVSRRKPYYTPIMKIEKLKKKKE</sequence>
<evidence type="ECO:0000255" key="1">
    <source>
        <dbReference type="HAMAP-Rule" id="MF_01225"/>
    </source>
</evidence>
<evidence type="ECO:0000255" key="2">
    <source>
        <dbReference type="PROSITE-ProRule" id="PRU01266"/>
    </source>
</evidence>
<name>MOAA_METMA</name>
<accession>Q8PX29</accession>